<proteinExistence type="evidence at protein level"/>
<accession>P38723</accession>
<accession>D3DKS3</accession>
<evidence type="ECO:0000255" key="1"/>
<evidence type="ECO:0000269" key="2">
    <source>
    </source>
</evidence>
<evidence type="ECO:0000305" key="3"/>
<gene>
    <name type="primary">COS8</name>
    <name type="ordered locus">YHL048W</name>
</gene>
<keyword id="KW-0472">Membrane</keyword>
<keyword id="KW-1185">Reference proteome</keyword>
<keyword id="KW-0812">Transmembrane</keyword>
<keyword id="KW-1133">Transmembrane helix</keyword>
<feature type="chain" id="PRO_0000207519" description="Protein COS8">
    <location>
        <begin position="1"/>
        <end position="381"/>
    </location>
</feature>
<feature type="topological domain" description="Extracellular" evidence="1">
    <location>
        <begin position="1"/>
        <end position="42"/>
    </location>
</feature>
<feature type="transmembrane region" description="Helical" evidence="1">
    <location>
        <begin position="43"/>
        <end position="63"/>
    </location>
</feature>
<feature type="topological domain" description="Cytoplasmic" evidence="1">
    <location>
        <begin position="64"/>
        <end position="72"/>
    </location>
</feature>
<feature type="transmembrane region" description="Helical" evidence="1">
    <location>
        <begin position="73"/>
        <end position="93"/>
    </location>
</feature>
<feature type="topological domain" description="Extracellular" evidence="1">
    <location>
        <begin position="94"/>
        <end position="237"/>
    </location>
</feature>
<feature type="transmembrane region" description="Helical" evidence="1">
    <location>
        <begin position="238"/>
        <end position="258"/>
    </location>
</feature>
<feature type="topological domain" description="Cytoplasmic" evidence="1">
    <location>
        <begin position="259"/>
        <end position="381"/>
    </location>
</feature>
<name>COS8_YEAST</name>
<dbReference type="EMBL" id="U11583">
    <property type="protein sequence ID" value="AAB65060.1"/>
    <property type="molecule type" value="Genomic_DNA"/>
</dbReference>
<dbReference type="EMBL" id="BK006934">
    <property type="protein sequence ID" value="DAA06640.1"/>
    <property type="molecule type" value="Genomic_DNA"/>
</dbReference>
<dbReference type="PIR" id="S48920">
    <property type="entry name" value="S48920"/>
</dbReference>
<dbReference type="RefSeq" id="NP_011815.1">
    <property type="nucleotide sequence ID" value="NM_001179128.1"/>
</dbReference>
<dbReference type="BioGRID" id="36377">
    <property type="interactions" value="67"/>
</dbReference>
<dbReference type="DIP" id="DIP-4866N"/>
<dbReference type="FunCoup" id="P38723">
    <property type="interactions" value="96"/>
</dbReference>
<dbReference type="IntAct" id="P38723">
    <property type="interactions" value="8"/>
</dbReference>
<dbReference type="MINT" id="P38723"/>
<dbReference type="STRING" id="4932.YHL048W"/>
<dbReference type="iPTMnet" id="P38723"/>
<dbReference type="PaxDb" id="4932-YHL048W"/>
<dbReference type="PeptideAtlas" id="P38723"/>
<dbReference type="EnsemblFungi" id="YHL048W_mRNA">
    <property type="protein sequence ID" value="YHL048W"/>
    <property type="gene ID" value="YHL048W"/>
</dbReference>
<dbReference type="GeneID" id="856337"/>
<dbReference type="KEGG" id="sce:YHL048W"/>
<dbReference type="AGR" id="SGD:S000001040"/>
<dbReference type="SGD" id="S000001040">
    <property type="gene designation" value="COS8"/>
</dbReference>
<dbReference type="VEuPathDB" id="FungiDB:YHL048W"/>
<dbReference type="eggNOG" id="ENOG502SAGH">
    <property type="taxonomic scope" value="Eukaryota"/>
</dbReference>
<dbReference type="GeneTree" id="ENSGT00940000176283"/>
<dbReference type="HOGENOM" id="CLU_062892_1_0_1"/>
<dbReference type="InParanoid" id="P38723"/>
<dbReference type="OMA" id="FFFNAMS"/>
<dbReference type="OrthoDB" id="4039705at2759"/>
<dbReference type="BioCyc" id="YEAST:G3O-31064-MONOMER"/>
<dbReference type="BioGRID-ORCS" id="856337">
    <property type="hits" value="0 hits in 10 CRISPR screens"/>
</dbReference>
<dbReference type="PRO" id="PR:P38723"/>
<dbReference type="Proteomes" id="UP000002311">
    <property type="component" value="Chromosome VIII"/>
</dbReference>
<dbReference type="RNAct" id="P38723">
    <property type="molecule type" value="protein"/>
</dbReference>
<dbReference type="GO" id="GO:0000324">
    <property type="term" value="C:fungal-type vacuole"/>
    <property type="evidence" value="ECO:0007005"/>
    <property type="project" value="SGD"/>
</dbReference>
<dbReference type="GO" id="GO:0016020">
    <property type="term" value="C:membrane"/>
    <property type="evidence" value="ECO:0007669"/>
    <property type="project" value="UniProtKB-SubCell"/>
</dbReference>
<dbReference type="GO" id="GO:0005635">
    <property type="term" value="C:nuclear envelope"/>
    <property type="evidence" value="ECO:0000314"/>
    <property type="project" value="SGD"/>
</dbReference>
<dbReference type="GO" id="GO:0043328">
    <property type="term" value="P:protein transport to vacuole involved in ubiquitin-dependent protein catabolic process via the multivesicular body sorting pathway"/>
    <property type="evidence" value="ECO:0000250"/>
    <property type="project" value="SGD"/>
</dbReference>
<dbReference type="InterPro" id="IPR001142">
    <property type="entry name" value="DUP/COS"/>
</dbReference>
<dbReference type="Pfam" id="PF00674">
    <property type="entry name" value="DUP"/>
    <property type="match status" value="2"/>
</dbReference>
<comment type="subcellular location">
    <subcellularLocation>
        <location>Membrane</location>
        <topology>Multi-pass membrane protein</topology>
    </subcellularLocation>
</comment>
<comment type="miscellaneous">
    <text evidence="2">Present with 3070 molecules/cell in log phase SD medium.</text>
</comment>
<comment type="similarity">
    <text evidence="3">Belongs to the DUP/COS family.</text>
</comment>
<reference key="1">
    <citation type="journal article" date="1994" name="Science">
        <title>Complete nucleotide sequence of Saccharomyces cerevisiae chromosome VIII.</title>
        <authorList>
            <person name="Johnston M."/>
            <person name="Andrews S."/>
            <person name="Brinkman R."/>
            <person name="Cooper J."/>
            <person name="Ding H."/>
            <person name="Dover J."/>
            <person name="Du Z."/>
            <person name="Favello A."/>
            <person name="Fulton L."/>
            <person name="Gattung S."/>
            <person name="Geisel C."/>
            <person name="Kirsten J."/>
            <person name="Kucaba T."/>
            <person name="Hillier L.W."/>
            <person name="Jier M."/>
            <person name="Johnston L."/>
            <person name="Langston Y."/>
            <person name="Latreille P."/>
            <person name="Louis E.J."/>
            <person name="Macri C."/>
            <person name="Mardis E."/>
            <person name="Menezes S."/>
            <person name="Mouser L."/>
            <person name="Nhan M."/>
            <person name="Rifkin L."/>
            <person name="Riles L."/>
            <person name="St Peter H."/>
            <person name="Trevaskis E."/>
            <person name="Vaughan K."/>
            <person name="Vignati D."/>
            <person name="Wilcox L."/>
            <person name="Wohldman P."/>
            <person name="Waterston R."/>
            <person name="Wilson R."/>
            <person name="Vaudin M."/>
        </authorList>
    </citation>
    <scope>NUCLEOTIDE SEQUENCE [LARGE SCALE GENOMIC DNA]</scope>
    <source>
        <strain>ATCC 204508 / S288c</strain>
    </source>
</reference>
<reference key="2">
    <citation type="journal article" date="2014" name="G3 (Bethesda)">
        <title>The reference genome sequence of Saccharomyces cerevisiae: Then and now.</title>
        <authorList>
            <person name="Engel S.R."/>
            <person name="Dietrich F.S."/>
            <person name="Fisk D.G."/>
            <person name="Binkley G."/>
            <person name="Balakrishnan R."/>
            <person name="Costanzo M.C."/>
            <person name="Dwight S.S."/>
            <person name="Hitz B.C."/>
            <person name="Karra K."/>
            <person name="Nash R.S."/>
            <person name="Weng S."/>
            <person name="Wong E.D."/>
            <person name="Lloyd P."/>
            <person name="Skrzypek M.S."/>
            <person name="Miyasato S.R."/>
            <person name="Simison M."/>
            <person name="Cherry J.M."/>
        </authorList>
    </citation>
    <scope>GENOME REANNOTATION</scope>
    <source>
        <strain>ATCC 204508 / S288c</strain>
    </source>
</reference>
<reference key="3">
    <citation type="journal article" date="2003" name="Nature">
        <title>Global analysis of protein expression in yeast.</title>
        <authorList>
            <person name="Ghaemmaghami S."/>
            <person name="Huh W.-K."/>
            <person name="Bower K."/>
            <person name="Howson R.W."/>
            <person name="Belle A."/>
            <person name="Dephoure N."/>
            <person name="O'Shea E.K."/>
            <person name="Weissman J.S."/>
        </authorList>
    </citation>
    <scope>LEVEL OF PROTEIN EXPRESSION [LARGE SCALE ANALYSIS]</scope>
</reference>
<reference key="4">
    <citation type="journal article" date="2006" name="Proc. Natl. Acad. Sci. U.S.A.">
        <title>A global topology map of the Saccharomyces cerevisiae membrane proteome.</title>
        <authorList>
            <person name="Kim H."/>
            <person name="Melen K."/>
            <person name="Oesterberg M."/>
            <person name="von Heijne G."/>
        </authorList>
    </citation>
    <scope>TOPOLOGY [LARGE SCALE ANALYSIS]</scope>
    <source>
        <strain>ATCC 208353 / W303-1A</strain>
    </source>
</reference>
<sequence length="381" mass="45880">MKENEVKDEKSVDVLSFKQLEFQKTVLPQDVFRNELTWFCYEIYKSLAFRIWMLLWLPLSVWWKLSSNWIHPLIVSLLVLFLGPFFVLVICGLSRKRSLSKQLIQFCKEITEDTPSSDPHDWEVVAANLNSYFYENKTWNTKYFFFNAMSCQKAFKTTLLEPFSLKKDESAKVKSFKDSVPYIEEALQVYAAGFDKEWKLFNTEKEESPFDLEDIQLPKEAYRFKLTWILKRIFNLRCLPLFLYYFLIVYTSGNADLISRFLFPVVMFFIMTRDFQNMRMIVLSVKMEHKMQFLSTIINEQESGANGWDEIAKKMNRYLFEKKVWNNEEFFYDGLDCEWFFRRFFYRLLSLKKPMWFASLNVELWPYIKEAQSARNEKPLK</sequence>
<organism>
    <name type="scientific">Saccharomyces cerevisiae (strain ATCC 204508 / S288c)</name>
    <name type="common">Baker's yeast</name>
    <dbReference type="NCBI Taxonomy" id="559292"/>
    <lineage>
        <taxon>Eukaryota</taxon>
        <taxon>Fungi</taxon>
        <taxon>Dikarya</taxon>
        <taxon>Ascomycota</taxon>
        <taxon>Saccharomycotina</taxon>
        <taxon>Saccharomycetes</taxon>
        <taxon>Saccharomycetales</taxon>
        <taxon>Saccharomycetaceae</taxon>
        <taxon>Saccharomyces</taxon>
    </lineage>
</organism>
<protein>
    <recommendedName>
        <fullName>Protein COS8</fullName>
    </recommendedName>
</protein>